<evidence type="ECO:0000255" key="1">
    <source>
        <dbReference type="HAMAP-Rule" id="MF_00238"/>
    </source>
</evidence>
<accession>Q9PJU0</accession>
<reference key="1">
    <citation type="journal article" date="2000" name="Nucleic Acids Res.">
        <title>Genome sequences of Chlamydia trachomatis MoPn and Chlamydia pneumoniae AR39.</title>
        <authorList>
            <person name="Read T.D."/>
            <person name="Brunham R.C."/>
            <person name="Shen C."/>
            <person name="Gill S.R."/>
            <person name="Heidelberg J.F."/>
            <person name="White O."/>
            <person name="Hickey E.K."/>
            <person name="Peterson J.D."/>
            <person name="Utterback T.R."/>
            <person name="Berry K.J."/>
            <person name="Bass S."/>
            <person name="Linher K.D."/>
            <person name="Weidman J.F."/>
            <person name="Khouri H.M."/>
            <person name="Craven B."/>
            <person name="Bowman C."/>
            <person name="Dodson R.J."/>
            <person name="Gwinn M.L."/>
            <person name="Nelson W.C."/>
            <person name="DeBoy R.T."/>
            <person name="Kolonay J.F."/>
            <person name="McClarty G."/>
            <person name="Salzberg S.L."/>
            <person name="Eisen J.A."/>
            <person name="Fraser C.M."/>
        </authorList>
    </citation>
    <scope>NUCLEOTIDE SEQUENCE [LARGE SCALE GENOMIC DNA]</scope>
    <source>
        <strain>MoPn / Nigg</strain>
    </source>
</reference>
<feature type="chain" id="PRO_0000131899" description="Cytidylate kinase">
    <location>
        <begin position="1"/>
        <end position="216"/>
    </location>
</feature>
<feature type="binding site" evidence="1">
    <location>
        <begin position="7"/>
        <end position="15"/>
    </location>
    <ligand>
        <name>ATP</name>
        <dbReference type="ChEBI" id="CHEBI:30616"/>
    </ligand>
</feature>
<gene>
    <name evidence="1" type="primary">cmk</name>
    <name type="ordered locus">TC_0737</name>
</gene>
<comment type="catalytic activity">
    <reaction evidence="1">
        <text>CMP + ATP = CDP + ADP</text>
        <dbReference type="Rhea" id="RHEA:11600"/>
        <dbReference type="ChEBI" id="CHEBI:30616"/>
        <dbReference type="ChEBI" id="CHEBI:58069"/>
        <dbReference type="ChEBI" id="CHEBI:60377"/>
        <dbReference type="ChEBI" id="CHEBI:456216"/>
        <dbReference type="EC" id="2.7.4.25"/>
    </reaction>
</comment>
<comment type="catalytic activity">
    <reaction evidence="1">
        <text>dCMP + ATP = dCDP + ADP</text>
        <dbReference type="Rhea" id="RHEA:25094"/>
        <dbReference type="ChEBI" id="CHEBI:30616"/>
        <dbReference type="ChEBI" id="CHEBI:57566"/>
        <dbReference type="ChEBI" id="CHEBI:58593"/>
        <dbReference type="ChEBI" id="CHEBI:456216"/>
        <dbReference type="EC" id="2.7.4.25"/>
    </reaction>
</comment>
<comment type="subcellular location">
    <subcellularLocation>
        <location evidence="1">Cytoplasm</location>
    </subcellularLocation>
</comment>
<comment type="similarity">
    <text evidence="1">Belongs to the cytidylate kinase family. Type 1 subfamily.</text>
</comment>
<keyword id="KW-0067">ATP-binding</keyword>
<keyword id="KW-0963">Cytoplasm</keyword>
<keyword id="KW-0418">Kinase</keyword>
<keyword id="KW-0547">Nucleotide-binding</keyword>
<keyword id="KW-0808">Transferase</keyword>
<protein>
    <recommendedName>
        <fullName evidence="1">Cytidylate kinase</fullName>
        <shortName evidence="1">CK</shortName>
        <ecNumber evidence="1">2.7.4.25</ecNumber>
    </recommendedName>
    <alternativeName>
        <fullName evidence="1">Cytidine monophosphate kinase</fullName>
        <shortName evidence="1">CMP kinase</shortName>
    </alternativeName>
</protein>
<sequence>MIITIDGPAGTGKSTLAKALAKTLQFNYCNTGAMYRTLAYARLQPDWQEVPLEDFLASPPFSFSFSKDAPLQAFYENRPLTSELISQEVANFASIFSKEPKVRAYMQTLQKRYASVGSCVFEGRDMGSKVFPHAEVKIFLTAEPEIRAKRRLKDLPEGSLSQEALTAELIARDQADQQRELDPLVIPADALVIDSSDLTISQILEKIVPLIHSRLA</sequence>
<proteinExistence type="inferred from homology"/>
<name>KCY_CHLMU</name>
<dbReference type="EC" id="2.7.4.25" evidence="1"/>
<dbReference type="EMBL" id="AE002160">
    <property type="protein sequence ID" value="AAF39547.1"/>
    <property type="molecule type" value="Genomic_DNA"/>
</dbReference>
<dbReference type="PIR" id="E81670">
    <property type="entry name" value="E81670"/>
</dbReference>
<dbReference type="RefSeq" id="WP_010231389.1">
    <property type="nucleotide sequence ID" value="NZ_CP063055.1"/>
</dbReference>
<dbReference type="SMR" id="Q9PJU0"/>
<dbReference type="GeneID" id="1246100"/>
<dbReference type="KEGG" id="cmu:TC_0737"/>
<dbReference type="eggNOG" id="COG0283">
    <property type="taxonomic scope" value="Bacteria"/>
</dbReference>
<dbReference type="HOGENOM" id="CLU_079959_0_2_0"/>
<dbReference type="OrthoDB" id="9807434at2"/>
<dbReference type="Proteomes" id="UP000000800">
    <property type="component" value="Chromosome"/>
</dbReference>
<dbReference type="GO" id="GO:0005737">
    <property type="term" value="C:cytoplasm"/>
    <property type="evidence" value="ECO:0007669"/>
    <property type="project" value="UniProtKB-SubCell"/>
</dbReference>
<dbReference type="GO" id="GO:0005524">
    <property type="term" value="F:ATP binding"/>
    <property type="evidence" value="ECO:0007669"/>
    <property type="project" value="UniProtKB-UniRule"/>
</dbReference>
<dbReference type="GO" id="GO:0036430">
    <property type="term" value="F:CMP kinase activity"/>
    <property type="evidence" value="ECO:0007669"/>
    <property type="project" value="RHEA"/>
</dbReference>
<dbReference type="GO" id="GO:0036431">
    <property type="term" value="F:dCMP kinase activity"/>
    <property type="evidence" value="ECO:0007669"/>
    <property type="project" value="RHEA"/>
</dbReference>
<dbReference type="GO" id="GO:0006220">
    <property type="term" value="P:pyrimidine nucleotide metabolic process"/>
    <property type="evidence" value="ECO:0007669"/>
    <property type="project" value="UniProtKB-UniRule"/>
</dbReference>
<dbReference type="CDD" id="cd02020">
    <property type="entry name" value="CMPK"/>
    <property type="match status" value="1"/>
</dbReference>
<dbReference type="FunFam" id="3.40.50.300:FF:003002">
    <property type="entry name" value="Cytidylate kinase"/>
    <property type="match status" value="1"/>
</dbReference>
<dbReference type="Gene3D" id="3.40.50.300">
    <property type="entry name" value="P-loop containing nucleotide triphosphate hydrolases"/>
    <property type="match status" value="1"/>
</dbReference>
<dbReference type="HAMAP" id="MF_00238">
    <property type="entry name" value="Cytidyl_kinase_type1"/>
    <property type="match status" value="1"/>
</dbReference>
<dbReference type="InterPro" id="IPR003136">
    <property type="entry name" value="Cytidylate_kin"/>
</dbReference>
<dbReference type="InterPro" id="IPR011994">
    <property type="entry name" value="Cytidylate_kinase_dom"/>
</dbReference>
<dbReference type="InterPro" id="IPR027417">
    <property type="entry name" value="P-loop_NTPase"/>
</dbReference>
<dbReference type="NCBIfam" id="TIGR00017">
    <property type="entry name" value="cmk"/>
    <property type="match status" value="1"/>
</dbReference>
<dbReference type="Pfam" id="PF02224">
    <property type="entry name" value="Cytidylate_kin"/>
    <property type="match status" value="1"/>
</dbReference>
<dbReference type="SUPFAM" id="SSF52540">
    <property type="entry name" value="P-loop containing nucleoside triphosphate hydrolases"/>
    <property type="match status" value="1"/>
</dbReference>
<organism>
    <name type="scientific">Chlamydia muridarum (strain MoPn / Nigg)</name>
    <dbReference type="NCBI Taxonomy" id="243161"/>
    <lineage>
        <taxon>Bacteria</taxon>
        <taxon>Pseudomonadati</taxon>
        <taxon>Chlamydiota</taxon>
        <taxon>Chlamydiia</taxon>
        <taxon>Chlamydiales</taxon>
        <taxon>Chlamydiaceae</taxon>
        <taxon>Chlamydia/Chlamydophila group</taxon>
        <taxon>Chlamydia</taxon>
    </lineage>
</organism>